<accession>Q8D206</accession>
<name>RS3_WIGBR</name>
<protein>
    <recommendedName>
        <fullName evidence="1">Small ribosomal subunit protein uS3</fullName>
    </recommendedName>
    <alternativeName>
        <fullName evidence="2">30S ribosomal protein S3</fullName>
    </alternativeName>
</protein>
<evidence type="ECO:0000255" key="1">
    <source>
        <dbReference type="HAMAP-Rule" id="MF_01309"/>
    </source>
</evidence>
<evidence type="ECO:0000305" key="2"/>
<reference key="1">
    <citation type="journal article" date="2002" name="Nat. Genet.">
        <title>Genome sequence of the endocellular obligate symbiont of tsetse flies, Wigglesworthia glossinidia.</title>
        <authorList>
            <person name="Akman L."/>
            <person name="Yamashita A."/>
            <person name="Watanabe H."/>
            <person name="Oshima K."/>
            <person name="Shiba T."/>
            <person name="Hattori M."/>
            <person name="Aksoy S."/>
        </authorList>
    </citation>
    <scope>NUCLEOTIDE SEQUENCE [LARGE SCALE GENOMIC DNA]</scope>
</reference>
<sequence length="236" mass="26827">MGQKVNPNGIRLGIIKSWSSTWYANTKEFSKNLISDFKVREFLKKSLSKAYVSKLIIERPAKSIRINIYTARPGIVIGRKGEDVDKLRKEISNITGVPAQISITEIKRPELDAKLVSENIASQLERRIMFRRAMKRAVQNAIRLGAKGIKVEVSGRLGGAEIARKEWYREGRVPLHTFRADIDYNTSEAHTTYGIIGVKVTIFKGEILGNSSPYINEKKYMPTKKGNKKIRKYTKE</sequence>
<feature type="chain" id="PRO_0000130234" description="Small ribosomal subunit protein uS3">
    <location>
        <begin position="1"/>
        <end position="236"/>
    </location>
</feature>
<feature type="domain" description="KH type-2" evidence="1">
    <location>
        <begin position="39"/>
        <end position="107"/>
    </location>
</feature>
<dbReference type="EMBL" id="BA000021">
    <property type="protein sequence ID" value="BAC24695.1"/>
    <property type="molecule type" value="Genomic_DNA"/>
</dbReference>
<dbReference type="SMR" id="Q8D206"/>
<dbReference type="STRING" id="36870.gene:10369058"/>
<dbReference type="KEGG" id="wbr:rpsC"/>
<dbReference type="eggNOG" id="COG0092">
    <property type="taxonomic scope" value="Bacteria"/>
</dbReference>
<dbReference type="HOGENOM" id="CLU_058591_0_2_6"/>
<dbReference type="OrthoDB" id="9806396at2"/>
<dbReference type="Proteomes" id="UP000000562">
    <property type="component" value="Chromosome"/>
</dbReference>
<dbReference type="GO" id="GO:0022627">
    <property type="term" value="C:cytosolic small ribosomal subunit"/>
    <property type="evidence" value="ECO:0007669"/>
    <property type="project" value="TreeGrafter"/>
</dbReference>
<dbReference type="GO" id="GO:0003729">
    <property type="term" value="F:mRNA binding"/>
    <property type="evidence" value="ECO:0007669"/>
    <property type="project" value="UniProtKB-UniRule"/>
</dbReference>
<dbReference type="GO" id="GO:0019843">
    <property type="term" value="F:rRNA binding"/>
    <property type="evidence" value="ECO:0007669"/>
    <property type="project" value="UniProtKB-UniRule"/>
</dbReference>
<dbReference type="GO" id="GO:0003735">
    <property type="term" value="F:structural constituent of ribosome"/>
    <property type="evidence" value="ECO:0007669"/>
    <property type="project" value="InterPro"/>
</dbReference>
<dbReference type="GO" id="GO:0006412">
    <property type="term" value="P:translation"/>
    <property type="evidence" value="ECO:0007669"/>
    <property type="project" value="UniProtKB-UniRule"/>
</dbReference>
<dbReference type="CDD" id="cd02412">
    <property type="entry name" value="KH-II_30S_S3"/>
    <property type="match status" value="1"/>
</dbReference>
<dbReference type="FunFam" id="3.30.1140.32:FF:000001">
    <property type="entry name" value="30S ribosomal protein S3"/>
    <property type="match status" value="1"/>
</dbReference>
<dbReference type="FunFam" id="3.30.300.20:FF:000001">
    <property type="entry name" value="30S ribosomal protein S3"/>
    <property type="match status" value="1"/>
</dbReference>
<dbReference type="Gene3D" id="3.30.300.20">
    <property type="match status" value="1"/>
</dbReference>
<dbReference type="Gene3D" id="3.30.1140.32">
    <property type="entry name" value="Ribosomal protein S3, C-terminal domain"/>
    <property type="match status" value="1"/>
</dbReference>
<dbReference type="HAMAP" id="MF_01309_B">
    <property type="entry name" value="Ribosomal_uS3_B"/>
    <property type="match status" value="1"/>
</dbReference>
<dbReference type="InterPro" id="IPR004087">
    <property type="entry name" value="KH_dom"/>
</dbReference>
<dbReference type="InterPro" id="IPR015946">
    <property type="entry name" value="KH_dom-like_a/b"/>
</dbReference>
<dbReference type="InterPro" id="IPR004044">
    <property type="entry name" value="KH_dom_type_2"/>
</dbReference>
<dbReference type="InterPro" id="IPR009019">
    <property type="entry name" value="KH_sf_prok-type"/>
</dbReference>
<dbReference type="InterPro" id="IPR036419">
    <property type="entry name" value="Ribosomal_S3_C_sf"/>
</dbReference>
<dbReference type="InterPro" id="IPR005704">
    <property type="entry name" value="Ribosomal_uS3_bac-typ"/>
</dbReference>
<dbReference type="InterPro" id="IPR001351">
    <property type="entry name" value="Ribosomal_uS3_C"/>
</dbReference>
<dbReference type="InterPro" id="IPR018280">
    <property type="entry name" value="Ribosomal_uS3_CS"/>
</dbReference>
<dbReference type="NCBIfam" id="TIGR01009">
    <property type="entry name" value="rpsC_bact"/>
    <property type="match status" value="1"/>
</dbReference>
<dbReference type="PANTHER" id="PTHR11760">
    <property type="entry name" value="30S/40S RIBOSOMAL PROTEIN S3"/>
    <property type="match status" value="1"/>
</dbReference>
<dbReference type="PANTHER" id="PTHR11760:SF19">
    <property type="entry name" value="SMALL RIBOSOMAL SUBUNIT PROTEIN US3C"/>
    <property type="match status" value="1"/>
</dbReference>
<dbReference type="Pfam" id="PF07650">
    <property type="entry name" value="KH_2"/>
    <property type="match status" value="1"/>
</dbReference>
<dbReference type="Pfam" id="PF00189">
    <property type="entry name" value="Ribosomal_S3_C"/>
    <property type="match status" value="1"/>
</dbReference>
<dbReference type="SMART" id="SM00322">
    <property type="entry name" value="KH"/>
    <property type="match status" value="1"/>
</dbReference>
<dbReference type="SUPFAM" id="SSF54814">
    <property type="entry name" value="Prokaryotic type KH domain (KH-domain type II)"/>
    <property type="match status" value="1"/>
</dbReference>
<dbReference type="SUPFAM" id="SSF54821">
    <property type="entry name" value="Ribosomal protein S3 C-terminal domain"/>
    <property type="match status" value="1"/>
</dbReference>
<dbReference type="PROSITE" id="PS50823">
    <property type="entry name" value="KH_TYPE_2"/>
    <property type="match status" value="1"/>
</dbReference>
<dbReference type="PROSITE" id="PS00548">
    <property type="entry name" value="RIBOSOMAL_S3"/>
    <property type="match status" value="1"/>
</dbReference>
<gene>
    <name evidence="1" type="primary">rpsC</name>
    <name type="ordered locus">WIGBR5490</name>
</gene>
<comment type="function">
    <text evidence="1">Binds the lower part of the 30S subunit head. Binds mRNA in the 70S ribosome, positioning it for translation.</text>
</comment>
<comment type="subunit">
    <text evidence="1">Part of the 30S ribosomal subunit. Forms a tight complex with proteins S10 and S14.</text>
</comment>
<comment type="similarity">
    <text evidence="1">Belongs to the universal ribosomal protein uS3 family.</text>
</comment>
<keyword id="KW-1185">Reference proteome</keyword>
<keyword id="KW-0687">Ribonucleoprotein</keyword>
<keyword id="KW-0689">Ribosomal protein</keyword>
<keyword id="KW-0694">RNA-binding</keyword>
<keyword id="KW-0699">rRNA-binding</keyword>
<proteinExistence type="inferred from homology"/>
<organism>
    <name type="scientific">Wigglesworthia glossinidia brevipalpis</name>
    <dbReference type="NCBI Taxonomy" id="36870"/>
    <lineage>
        <taxon>Bacteria</taxon>
        <taxon>Pseudomonadati</taxon>
        <taxon>Pseudomonadota</taxon>
        <taxon>Gammaproteobacteria</taxon>
        <taxon>Enterobacterales</taxon>
        <taxon>Erwiniaceae</taxon>
        <taxon>Wigglesworthia</taxon>
    </lineage>
</organism>